<gene>
    <name evidence="1" type="primary">rpsM</name>
    <name type="ordered locus">SPH_0347</name>
</gene>
<keyword id="KW-0687">Ribonucleoprotein</keyword>
<keyword id="KW-0689">Ribosomal protein</keyword>
<keyword id="KW-0694">RNA-binding</keyword>
<keyword id="KW-0699">rRNA-binding</keyword>
<keyword id="KW-0820">tRNA-binding</keyword>
<accession>B1I8M2</accession>
<proteinExistence type="inferred from homology"/>
<evidence type="ECO:0000255" key="1">
    <source>
        <dbReference type="HAMAP-Rule" id="MF_01315"/>
    </source>
</evidence>
<evidence type="ECO:0000256" key="2">
    <source>
        <dbReference type="SAM" id="MobiDB-lite"/>
    </source>
</evidence>
<evidence type="ECO:0000305" key="3"/>
<reference key="1">
    <citation type="journal article" date="2010" name="Genome Biol.">
        <title>Structure and dynamics of the pan-genome of Streptococcus pneumoniae and closely related species.</title>
        <authorList>
            <person name="Donati C."/>
            <person name="Hiller N.L."/>
            <person name="Tettelin H."/>
            <person name="Muzzi A."/>
            <person name="Croucher N.J."/>
            <person name="Angiuoli S.V."/>
            <person name="Oggioni M."/>
            <person name="Dunning Hotopp J.C."/>
            <person name="Hu F.Z."/>
            <person name="Riley D.R."/>
            <person name="Covacci A."/>
            <person name="Mitchell T.J."/>
            <person name="Bentley S.D."/>
            <person name="Kilian M."/>
            <person name="Ehrlich G.D."/>
            <person name="Rappuoli R."/>
            <person name="Moxon E.R."/>
            <person name="Masignani V."/>
        </authorList>
    </citation>
    <scope>NUCLEOTIDE SEQUENCE [LARGE SCALE GENOMIC DNA]</scope>
    <source>
        <strain>Hungary19A-6</strain>
    </source>
</reference>
<feature type="chain" id="PRO_1000141316" description="Small ribosomal subunit protein uS13">
    <location>
        <begin position="1"/>
        <end position="121"/>
    </location>
</feature>
<feature type="region of interest" description="Disordered" evidence="2">
    <location>
        <begin position="96"/>
        <end position="121"/>
    </location>
</feature>
<feature type="compositionally biased region" description="Basic residues" evidence="2">
    <location>
        <begin position="106"/>
        <end position="121"/>
    </location>
</feature>
<protein>
    <recommendedName>
        <fullName evidence="1">Small ribosomal subunit protein uS13</fullName>
    </recommendedName>
    <alternativeName>
        <fullName evidence="3">30S ribosomal protein S13</fullName>
    </alternativeName>
</protein>
<name>RS13_STRPI</name>
<comment type="function">
    <text evidence="1">Located at the top of the head of the 30S subunit, it contacts several helices of the 16S rRNA. In the 70S ribosome it contacts the 23S rRNA (bridge B1a) and protein L5 of the 50S subunit (bridge B1b), connecting the 2 subunits; these bridges are implicated in subunit movement. Contacts the tRNAs in the A and P-sites.</text>
</comment>
<comment type="subunit">
    <text evidence="1">Part of the 30S ribosomal subunit. Forms a loose heterodimer with protein S19. Forms two bridges to the 50S subunit in the 70S ribosome.</text>
</comment>
<comment type="similarity">
    <text evidence="1">Belongs to the universal ribosomal protein uS13 family.</text>
</comment>
<organism>
    <name type="scientific">Streptococcus pneumoniae (strain Hungary19A-6)</name>
    <dbReference type="NCBI Taxonomy" id="487214"/>
    <lineage>
        <taxon>Bacteria</taxon>
        <taxon>Bacillati</taxon>
        <taxon>Bacillota</taxon>
        <taxon>Bacilli</taxon>
        <taxon>Lactobacillales</taxon>
        <taxon>Streptococcaceae</taxon>
        <taxon>Streptococcus</taxon>
    </lineage>
</organism>
<sequence length="121" mass="13422">MARIAGVDIPNDKRVVISLTYVYGIGLATSKKILAAAGISEDVRVRDLTSDQEDAIRREVDAIKVEGDLRREVNLNIKRLMEIGSYRGIRHRRGLPVRGQNTKNNARTRKGKAVAIAGKKK</sequence>
<dbReference type="EMBL" id="CP000936">
    <property type="protein sequence ID" value="ACA36232.1"/>
    <property type="molecule type" value="Genomic_DNA"/>
</dbReference>
<dbReference type="RefSeq" id="WP_000090781.1">
    <property type="nucleotide sequence ID" value="NC_010380.1"/>
</dbReference>
<dbReference type="SMR" id="B1I8M2"/>
<dbReference type="GeneID" id="93738981"/>
<dbReference type="KEGG" id="spv:SPH_0347"/>
<dbReference type="HOGENOM" id="CLU_103849_1_1_9"/>
<dbReference type="Proteomes" id="UP000002163">
    <property type="component" value="Chromosome"/>
</dbReference>
<dbReference type="GO" id="GO:0005829">
    <property type="term" value="C:cytosol"/>
    <property type="evidence" value="ECO:0007669"/>
    <property type="project" value="TreeGrafter"/>
</dbReference>
<dbReference type="GO" id="GO:0015935">
    <property type="term" value="C:small ribosomal subunit"/>
    <property type="evidence" value="ECO:0007669"/>
    <property type="project" value="TreeGrafter"/>
</dbReference>
<dbReference type="GO" id="GO:0019843">
    <property type="term" value="F:rRNA binding"/>
    <property type="evidence" value="ECO:0007669"/>
    <property type="project" value="UniProtKB-UniRule"/>
</dbReference>
<dbReference type="GO" id="GO:0003735">
    <property type="term" value="F:structural constituent of ribosome"/>
    <property type="evidence" value="ECO:0007669"/>
    <property type="project" value="InterPro"/>
</dbReference>
<dbReference type="GO" id="GO:0000049">
    <property type="term" value="F:tRNA binding"/>
    <property type="evidence" value="ECO:0007669"/>
    <property type="project" value="UniProtKB-UniRule"/>
</dbReference>
<dbReference type="GO" id="GO:0006412">
    <property type="term" value="P:translation"/>
    <property type="evidence" value="ECO:0007669"/>
    <property type="project" value="UniProtKB-UniRule"/>
</dbReference>
<dbReference type="FunFam" id="1.10.8.50:FF:000001">
    <property type="entry name" value="30S ribosomal protein S13"/>
    <property type="match status" value="1"/>
</dbReference>
<dbReference type="FunFam" id="4.10.910.10:FF:000001">
    <property type="entry name" value="30S ribosomal protein S13"/>
    <property type="match status" value="1"/>
</dbReference>
<dbReference type="Gene3D" id="1.10.8.50">
    <property type="match status" value="1"/>
</dbReference>
<dbReference type="Gene3D" id="4.10.910.10">
    <property type="entry name" value="30s ribosomal protein s13, domain 2"/>
    <property type="match status" value="1"/>
</dbReference>
<dbReference type="HAMAP" id="MF_01315">
    <property type="entry name" value="Ribosomal_uS13"/>
    <property type="match status" value="1"/>
</dbReference>
<dbReference type="InterPro" id="IPR027437">
    <property type="entry name" value="Rbsml_uS13_C"/>
</dbReference>
<dbReference type="InterPro" id="IPR001892">
    <property type="entry name" value="Ribosomal_uS13"/>
</dbReference>
<dbReference type="InterPro" id="IPR010979">
    <property type="entry name" value="Ribosomal_uS13-like_H2TH"/>
</dbReference>
<dbReference type="InterPro" id="IPR019980">
    <property type="entry name" value="Ribosomal_uS13_bac-type"/>
</dbReference>
<dbReference type="InterPro" id="IPR018269">
    <property type="entry name" value="Ribosomal_uS13_CS"/>
</dbReference>
<dbReference type="NCBIfam" id="TIGR03631">
    <property type="entry name" value="uS13_bact"/>
    <property type="match status" value="1"/>
</dbReference>
<dbReference type="PANTHER" id="PTHR10871">
    <property type="entry name" value="30S RIBOSOMAL PROTEIN S13/40S RIBOSOMAL PROTEIN S18"/>
    <property type="match status" value="1"/>
</dbReference>
<dbReference type="PANTHER" id="PTHR10871:SF1">
    <property type="entry name" value="SMALL RIBOSOMAL SUBUNIT PROTEIN US13M"/>
    <property type="match status" value="1"/>
</dbReference>
<dbReference type="Pfam" id="PF00416">
    <property type="entry name" value="Ribosomal_S13"/>
    <property type="match status" value="1"/>
</dbReference>
<dbReference type="PIRSF" id="PIRSF002134">
    <property type="entry name" value="Ribosomal_S13"/>
    <property type="match status" value="1"/>
</dbReference>
<dbReference type="SUPFAM" id="SSF46946">
    <property type="entry name" value="S13-like H2TH domain"/>
    <property type="match status" value="1"/>
</dbReference>
<dbReference type="PROSITE" id="PS00646">
    <property type="entry name" value="RIBOSOMAL_S13_1"/>
    <property type="match status" value="1"/>
</dbReference>
<dbReference type="PROSITE" id="PS50159">
    <property type="entry name" value="RIBOSOMAL_S13_2"/>
    <property type="match status" value="1"/>
</dbReference>